<comment type="function">
    <text evidence="11 14 17">Repressor of jasmonate responses. Jasmonoyl-isoleucine (JA-Ile) specifically promotes COI1-TIFY10B/JAZ2 interaction. Activated by MYC2, MYC3 and MYC4 transcription factors (PubMed:19151223, PubMed:21335373). Interacts with and suppresses RHD6 and RSL1 transcription factor activities to negatively regulate jasmonate-stimulated root hair development (PubMed:31988260).</text>
</comment>
<comment type="subunit">
    <text evidence="10 11 12 13 14 17">Homo- and heterodimer. Interacts with COI1, MYC2, MYC3, MYC4, AFPH2/NINJA, TIFY10A/JAZ1, TIFY6B/JAZ3, TIFY11A/JAZ5, TIFY11B/JAZ6, TIFY5A/JAZ8, TIFY7/JAZ9, TIFY9/JAZ10, TIFY3A/JAZ11 and TIFY3B/JAZ12 (PubMed:18547396, PubMed:19151223, PubMed:19309455, PubMed:20360743, PubMed:21335373). Interacts with RHD6 and RSL1 (PubMed:31988260).</text>
</comment>
<comment type="subunit">
    <text evidence="16">(Microbial infection) Interacts with the pathogenic Pseudomonas syringae HopZ1a protein.</text>
</comment>
<comment type="interaction">
    <interactant intactId="EBI-1792563">
        <id>Q9S7M2</id>
    </interactant>
    <interactant intactId="EBI-1787005">
        <id>Q9SV55</id>
        <label>AFPH2</label>
    </interactant>
    <organismsDiffer>false</organismsDiffer>
    <experiments>6</experiments>
</comment>
<comment type="interaction">
    <interactant intactId="EBI-1792563">
        <id>Q9S7M2</id>
    </interactant>
    <interactant intactId="EBI-4434261">
        <id>Q9LNJ5</id>
        <label>BHLH13</label>
    </interactant>
    <organismsDiffer>false</organismsDiffer>
    <experiments>6</experiments>
</comment>
<comment type="interaction">
    <interactant intactId="EBI-1792563">
        <id>Q9S7M2</id>
    </interactant>
    <interactant intactId="EBI-4448729">
        <id>Q9ZVC9</id>
        <label>FRS3</label>
    </interactant>
    <organismsDiffer>false</organismsDiffer>
    <experiments>6</experiments>
</comment>
<comment type="interaction">
    <interactant intactId="EBI-1792563">
        <id>Q9S7M2</id>
    </interactant>
    <interactant intactId="EBI-1792336">
        <id>Q39204</id>
        <label>MYC2</label>
    </interactant>
    <organismsDiffer>false</organismsDiffer>
    <experiments>5</experiments>
</comment>
<comment type="interaction">
    <interactant intactId="EBI-1792563">
        <id>Q9S7M2</id>
    </interactant>
    <interactant intactId="EBI-15406909">
        <id>O49687</id>
        <label>MYC4</label>
    </interactant>
    <organismsDiffer>false</organismsDiffer>
    <experiments>3</experiments>
</comment>
<comment type="interaction">
    <interactant intactId="EBI-1792563">
        <id>Q9S7M2</id>
    </interactant>
    <interactant intactId="EBI-4426144">
        <id>Q9C9L2</id>
        <label>TCP15</label>
    </interactant>
    <organismsDiffer>false</organismsDiffer>
    <experiments>3</experiments>
</comment>
<comment type="interaction">
    <interactant intactId="EBI-1792563">
        <id>Q9S7M2</id>
    </interactant>
    <interactant intactId="EBI-25522447">
        <id>Q9MAH8</id>
        <label>TCP3</label>
    </interactant>
    <organismsDiffer>false</organismsDiffer>
    <experiments>3</experiments>
</comment>
<comment type="interaction">
    <interactant intactId="EBI-1792563">
        <id>Q9S7M2</id>
    </interactant>
    <interactant intactId="EBI-1388539">
        <id>Q9LMA8</id>
        <label>TIFY10A</label>
    </interactant>
    <organismsDiffer>false</organismsDiffer>
    <experiments>5</experiments>
</comment>
<comment type="interaction">
    <interactant intactId="EBI-1792563">
        <id>Q9S7M2</id>
    </interactant>
    <interactant intactId="EBI-1792563">
        <id>Q9S7M2</id>
        <label>TIFY10B</label>
    </interactant>
    <organismsDiffer>false</organismsDiffer>
    <experiments>3</experiments>
</comment>
<comment type="subcellular location">
    <subcellularLocation>
        <location evidence="6">Nucleus</location>
    </subcellularLocation>
</comment>
<comment type="tissue specificity">
    <text evidence="15">Expressed in cotyledons, hypocotyls, roots, sepals, petal vascular tissue and stigmas of developing flowers. Expressed in stamen filaments after jasmonic acid treatment.</text>
</comment>
<comment type="induction">
    <text evidence="3">(Microbial infection) Triggered to degradation by the pathogenic Pseudomonas syringae HopZ1a protein in a COI1-dependent manner, thereby activating host jasmonate signaling.</text>
</comment>
<comment type="induction">
    <text evidence="8 9">Up-regulated by jasmonate, wounding and herbivory.</text>
</comment>
<comment type="domain">
    <text evidence="1 2">The jas domain (204-229) is required for interaction with COI1 and Pseudomonas syringae HopZ1a.</text>
</comment>
<comment type="PTM">
    <text evidence="2">(Microbial infection) Acetylated by Pseudomonas syringae HopZ1a.</text>
</comment>
<comment type="PTM">
    <text evidence="1">Ubiquitinated. Targeted for degradation by the SCF(COI1) E3 ubiquitin ligase-proteasome pathway during jasmonate signaling.</text>
</comment>
<comment type="similarity">
    <text evidence="21">Belongs to the TIFY/JAZ family.</text>
</comment>
<reference key="1">
    <citation type="journal article" date="2000" name="Nature">
        <title>Sequence and analysis of chromosome 1 of the plant Arabidopsis thaliana.</title>
        <authorList>
            <person name="Theologis A."/>
            <person name="Ecker J.R."/>
            <person name="Palm C.J."/>
            <person name="Federspiel N.A."/>
            <person name="Kaul S."/>
            <person name="White O."/>
            <person name="Alonso J."/>
            <person name="Altafi H."/>
            <person name="Araujo R."/>
            <person name="Bowman C.L."/>
            <person name="Brooks S.Y."/>
            <person name="Buehler E."/>
            <person name="Chan A."/>
            <person name="Chao Q."/>
            <person name="Chen H."/>
            <person name="Cheuk R.F."/>
            <person name="Chin C.W."/>
            <person name="Chung M.K."/>
            <person name="Conn L."/>
            <person name="Conway A.B."/>
            <person name="Conway A.R."/>
            <person name="Creasy T.H."/>
            <person name="Dewar K."/>
            <person name="Dunn P."/>
            <person name="Etgu P."/>
            <person name="Feldblyum T.V."/>
            <person name="Feng J.-D."/>
            <person name="Fong B."/>
            <person name="Fujii C.Y."/>
            <person name="Gill J.E."/>
            <person name="Goldsmith A.D."/>
            <person name="Haas B."/>
            <person name="Hansen N.F."/>
            <person name="Hughes B."/>
            <person name="Huizar L."/>
            <person name="Hunter J.L."/>
            <person name="Jenkins J."/>
            <person name="Johnson-Hopson C."/>
            <person name="Khan S."/>
            <person name="Khaykin E."/>
            <person name="Kim C.J."/>
            <person name="Koo H.L."/>
            <person name="Kremenetskaia I."/>
            <person name="Kurtz D.B."/>
            <person name="Kwan A."/>
            <person name="Lam B."/>
            <person name="Langin-Hooper S."/>
            <person name="Lee A."/>
            <person name="Lee J.M."/>
            <person name="Lenz C.A."/>
            <person name="Li J.H."/>
            <person name="Li Y.-P."/>
            <person name="Lin X."/>
            <person name="Liu S.X."/>
            <person name="Liu Z.A."/>
            <person name="Luros J.S."/>
            <person name="Maiti R."/>
            <person name="Marziali A."/>
            <person name="Militscher J."/>
            <person name="Miranda M."/>
            <person name="Nguyen M."/>
            <person name="Nierman W.C."/>
            <person name="Osborne B.I."/>
            <person name="Pai G."/>
            <person name="Peterson J."/>
            <person name="Pham P.K."/>
            <person name="Rizzo M."/>
            <person name="Rooney T."/>
            <person name="Rowley D."/>
            <person name="Sakano H."/>
            <person name="Salzberg S.L."/>
            <person name="Schwartz J.R."/>
            <person name="Shinn P."/>
            <person name="Southwick A.M."/>
            <person name="Sun H."/>
            <person name="Tallon L.J."/>
            <person name="Tambunga G."/>
            <person name="Toriumi M.J."/>
            <person name="Town C.D."/>
            <person name="Utterback T."/>
            <person name="Van Aken S."/>
            <person name="Vaysberg M."/>
            <person name="Vysotskaia V.S."/>
            <person name="Walker M."/>
            <person name="Wu D."/>
            <person name="Yu G."/>
            <person name="Fraser C.M."/>
            <person name="Venter J.C."/>
            <person name="Davis R.W."/>
        </authorList>
    </citation>
    <scope>NUCLEOTIDE SEQUENCE [LARGE SCALE GENOMIC DNA]</scope>
    <source>
        <strain>cv. Columbia</strain>
    </source>
</reference>
<reference key="2">
    <citation type="journal article" date="2017" name="Plant J.">
        <title>Araport11: a complete reannotation of the Arabidopsis thaliana reference genome.</title>
        <authorList>
            <person name="Cheng C.Y."/>
            <person name="Krishnakumar V."/>
            <person name="Chan A.P."/>
            <person name="Thibaud-Nissen F."/>
            <person name="Schobel S."/>
            <person name="Town C.D."/>
        </authorList>
    </citation>
    <scope>GENOME REANNOTATION</scope>
    <source>
        <strain>cv. Columbia</strain>
    </source>
</reference>
<reference key="3">
    <citation type="journal article" date="2003" name="Science">
        <title>Empirical analysis of transcriptional activity in the Arabidopsis genome.</title>
        <authorList>
            <person name="Yamada K."/>
            <person name="Lim J."/>
            <person name="Dale J.M."/>
            <person name="Chen H."/>
            <person name="Shinn P."/>
            <person name="Palm C.J."/>
            <person name="Southwick A.M."/>
            <person name="Wu H.C."/>
            <person name="Kim C.J."/>
            <person name="Nguyen M."/>
            <person name="Pham P.K."/>
            <person name="Cheuk R.F."/>
            <person name="Karlin-Newmann G."/>
            <person name="Liu S.X."/>
            <person name="Lam B."/>
            <person name="Sakano H."/>
            <person name="Wu T."/>
            <person name="Yu G."/>
            <person name="Miranda M."/>
            <person name="Quach H.L."/>
            <person name="Tripp M."/>
            <person name="Chang C.H."/>
            <person name="Lee J.M."/>
            <person name="Toriumi M.J."/>
            <person name="Chan M.M."/>
            <person name="Tang C.C."/>
            <person name="Onodera C.S."/>
            <person name="Deng J.M."/>
            <person name="Akiyama K."/>
            <person name="Ansari Y."/>
            <person name="Arakawa T."/>
            <person name="Banh J."/>
            <person name="Banno F."/>
            <person name="Bowser L."/>
            <person name="Brooks S.Y."/>
            <person name="Carninci P."/>
            <person name="Chao Q."/>
            <person name="Choy N."/>
            <person name="Enju A."/>
            <person name="Goldsmith A.D."/>
            <person name="Gurjal M."/>
            <person name="Hansen N.F."/>
            <person name="Hayashizaki Y."/>
            <person name="Johnson-Hopson C."/>
            <person name="Hsuan V.W."/>
            <person name="Iida K."/>
            <person name="Karnes M."/>
            <person name="Khan S."/>
            <person name="Koesema E."/>
            <person name="Ishida J."/>
            <person name="Jiang P.X."/>
            <person name="Jones T."/>
            <person name="Kawai J."/>
            <person name="Kamiya A."/>
            <person name="Meyers C."/>
            <person name="Nakajima M."/>
            <person name="Narusaka M."/>
            <person name="Seki M."/>
            <person name="Sakurai T."/>
            <person name="Satou M."/>
            <person name="Tamse R."/>
            <person name="Vaysberg M."/>
            <person name="Wallender E.K."/>
            <person name="Wong C."/>
            <person name="Yamamura Y."/>
            <person name="Yuan S."/>
            <person name="Shinozaki K."/>
            <person name="Davis R.W."/>
            <person name="Theologis A."/>
            <person name="Ecker J.R."/>
        </authorList>
    </citation>
    <scope>NUCLEOTIDE SEQUENCE [LARGE SCALE MRNA]</scope>
    <source>
        <strain>cv. Columbia</strain>
    </source>
</reference>
<reference key="4">
    <citation type="submission" date="2002-03" db="EMBL/GenBank/DDBJ databases">
        <title>Full-length cDNA from Arabidopsis thaliana.</title>
        <authorList>
            <person name="Brover V.V."/>
            <person name="Troukhan M.E."/>
            <person name="Alexandrov N.A."/>
            <person name="Lu Y.-P."/>
            <person name="Flavell R.B."/>
            <person name="Feldmann K.A."/>
        </authorList>
    </citation>
    <scope>NUCLEOTIDE SEQUENCE [LARGE SCALE MRNA]</scope>
</reference>
<reference key="5">
    <citation type="journal article" date="2007" name="Nature">
        <title>JAZ repressor proteins are targets of the SCF(COI1) complex during jasmonate signalling.</title>
        <authorList>
            <person name="Thines B."/>
            <person name="Katsir L."/>
            <person name="Melotto M."/>
            <person name="Niu Y."/>
            <person name="Mandaokar A."/>
            <person name="Liu G."/>
            <person name="Nomura K."/>
            <person name="He S.Y."/>
            <person name="Howe G.A."/>
            <person name="Browse J."/>
        </authorList>
    </citation>
    <scope>INDUCTION BY JASMONATE</scope>
</reference>
<reference key="6">
    <citation type="journal article" date="2007" name="Nature">
        <title>The JAZ family of repressors is the missing link in jasmonate signalling.</title>
        <authorList>
            <person name="Chini A."/>
            <person name="Fonseca S."/>
            <person name="Fernandez G."/>
            <person name="Adie B."/>
            <person name="Chico J.M."/>
            <person name="Lorenzo O."/>
            <person name="Garcia-Casado G."/>
            <person name="Lopez-Vidriero I."/>
            <person name="Lozano F.M."/>
            <person name="Ponce M.R."/>
            <person name="Micol J.L."/>
            <person name="Solano R."/>
        </authorList>
    </citation>
    <scope>GENE FAMILY</scope>
    <scope>NOMENCLATURE</scope>
</reference>
<reference key="7">
    <citation type="journal article" date="2007" name="Plant Cell">
        <title>A downstream mediator in the growth repression limb of the jasmonate pathway.</title>
        <authorList>
            <person name="Yan Y."/>
            <person name="Stolz S."/>
            <person name="Chetelat A."/>
            <person name="Reymond P."/>
            <person name="Pagni M."/>
            <person name="Dubugnon L."/>
            <person name="Farmer E.E."/>
        </authorList>
    </citation>
    <scope>DOMAIN</scope>
</reference>
<reference key="8">
    <citation type="journal article" date="2007" name="Trends Plant Sci.">
        <title>The tify family previously known as ZIM.</title>
        <authorList>
            <person name="Vanholme B."/>
            <person name="Grunewald W."/>
            <person name="Bateman A."/>
            <person name="Kohchi T."/>
            <person name="Gheysen G."/>
        </authorList>
    </citation>
    <scope>GENE FAMILY</scope>
    <scope>NOMENCLATURE</scope>
</reference>
<reference key="9">
    <citation type="journal article" date="2008" name="Plant J.">
        <title>A critical role of two positively charged amino acids in the Jas motif of Arabidopsis JAZ proteins in mediating coronatine- and jasmonoyl isoleucine-dependent interactions with the COI1 F-box protein.</title>
        <authorList>
            <person name="Melotto M."/>
            <person name="Mecey C."/>
            <person name="Niu Y."/>
            <person name="Chung H.S."/>
            <person name="Katsir L."/>
            <person name="Yao J."/>
            <person name="Zeng W."/>
            <person name="Thines B."/>
            <person name="Staswick P."/>
            <person name="Browse J."/>
            <person name="Howe G.A."/>
            <person name="He S.Y."/>
        </authorList>
    </citation>
    <scope>INTERACTION WITH COI1</scope>
</reference>
<reference key="10">
    <citation type="journal article" date="2008" name="Plant Physiol.">
        <title>Regulation and function of Arabidopsis JASMONATE ZIM-domain genes in response to wounding and herbivory.</title>
        <authorList>
            <person name="Chung H.S."/>
            <person name="Koo A.J."/>
            <person name="Gao X."/>
            <person name="Jayanty S."/>
            <person name="Thines B."/>
            <person name="Jones A.D."/>
            <person name="Howe G.A."/>
        </authorList>
    </citation>
    <scope>INDUCTION BY WOUNDING AND HERBIVORY</scope>
</reference>
<reference key="11">
    <citation type="journal article" date="2009" name="Plant Cell">
        <title>A critical role for the TIFY motif in repression of jasmonate signaling by a stabilized splice variant of the JASMONATE ZIM-domain protein JAZ10 in Arabidopsis.</title>
        <authorList>
            <person name="Chung H.S."/>
            <person name="Howe G.A."/>
        </authorList>
    </citation>
    <scope>FUNCTION</scope>
    <scope>INTERACTION WITH TIFY10A/JAZ1; TIFY6B/JAZ3; TIFY11A/JAZ5; TIFY11B/JAZ6; TIFY5A/JAZ8; TIFY7/JAZ9; TIFY9/JAZ10; TIFY3A/JAZ11 AND TIFY3B/JAZ12</scope>
    <scope>SUBUNIT</scope>
</reference>
<reference key="12">
    <citation type="journal article" date="2009" name="Plant J.">
        <title>The ZIM domain mediates homo- and heteromeric interactions between Arabidopsis JAZ proteins.</title>
        <authorList>
            <person name="Chini A."/>
            <person name="Fonseca S."/>
            <person name="Chico J.M."/>
            <person name="Fernandez-Calvo P."/>
            <person name="Solano R."/>
        </authorList>
    </citation>
    <scope>INTERACTION WITH MYC2</scope>
</reference>
<reference key="13">
    <citation type="journal article" date="2010" name="Nature">
        <title>NINJA connects the co-repressor TOPLESS to jasmonate signalling.</title>
        <authorList>
            <person name="Pauwels L."/>
            <person name="Barbero G.F."/>
            <person name="Geerinck J."/>
            <person name="Tilleman S."/>
            <person name="Grunewald W."/>
            <person name="Perez A.C."/>
            <person name="Chico J.M."/>
            <person name="Bossche R.V."/>
            <person name="Sewell J."/>
            <person name="Gil E."/>
            <person name="Garcia-Casado G."/>
            <person name="Witters E."/>
            <person name="Inze D."/>
            <person name="Long J.A."/>
            <person name="De Jaeger G."/>
            <person name="Solano R."/>
            <person name="Goossens A."/>
        </authorList>
    </citation>
    <scope>INTERACTION WITH AFPH2/NINJA</scope>
</reference>
<reference key="14">
    <citation type="journal article" date="2011" name="Plant Cell">
        <title>The Arabidopsis bHLH transcription factors MYC3 and MYC4 are targets of JAZ repressors and act additively with MYC2 in the activation of jasmonate responses.</title>
        <authorList>
            <person name="Fernandez-Calvo P."/>
            <person name="Chini A."/>
            <person name="Fernandez-Barbero G."/>
            <person name="Chico J.M."/>
            <person name="Gimenez-Ibanez S."/>
            <person name="Geerinck J."/>
            <person name="Eeckhout D."/>
            <person name="Schweizer F."/>
            <person name="Godoy M."/>
            <person name="Franco-Zorrilla J.M."/>
            <person name="Pauwels L."/>
            <person name="Witters E."/>
            <person name="Puga M.I."/>
            <person name="Paz-Ares J."/>
            <person name="Goossens A."/>
            <person name="Reymond P."/>
            <person name="De Jaeger G."/>
            <person name="Solano R."/>
        </authorList>
    </citation>
    <scope>FUNCTION</scope>
    <scope>INTERACTION WITH MYC2; MYC3; MYC4 TIFY11A/JAZ5 AND AFPH2/NINJA</scope>
    <scope>SUBUNIT</scope>
</reference>
<reference key="15">
    <citation type="journal article" date="2012" name="Plant Cell Physiol.">
        <title>The Arabidopsis JAZ2 promoter contains a G-Box and thymidine-rich module that are necessary and sufficient for jasmonate-dependent activation by MYC transcription factors and repression by JAZ proteins.</title>
        <authorList>
            <person name="Figueroa P."/>
            <person name="Browse J."/>
        </authorList>
    </citation>
    <scope>TISSUE SPECIFICITY</scope>
</reference>
<reference key="16">
    <citation type="journal article" date="2013" name="PLoS Pathog.">
        <title>Bacterial effector activates jasmonate signaling by directly targeting JAZ transcriptional repressors.</title>
        <authorList>
            <person name="Jiang S."/>
            <person name="Yao J."/>
            <person name="Ma K.-W."/>
            <person name="Zhou H."/>
            <person name="Song J."/>
            <person name="He S.Y."/>
            <person name="Ma W."/>
        </authorList>
    </citation>
    <scope>INTERACTION WITH PSEUDOMONAS SYRINGAE HOPZ1A (MICROBIAL INFECTION)</scope>
    <source>
        <strain>cv. Columbia</strain>
    </source>
</reference>
<reference key="17">
    <citation type="journal article" date="2020" name="Plant Cell">
        <title>Arabidopsis JAZ proteins interact with and suppress RHD6 transcription factor to regulate jasmonate-stimulated root hair development.</title>
        <authorList>
            <person name="Han X."/>
            <person name="Zhang M."/>
            <person name="Yang M."/>
            <person name="Hu Y."/>
        </authorList>
    </citation>
    <scope>FUNCTION</scope>
    <scope>INTERACTION WITH RHD6 AND RSL1</scope>
</reference>
<sequence>MSSFSAECWDFSGRKPSFSQTCTRLSRYLKEKGSFGDLSLGMTCKPDVNGGSRQPTMMNLFPCEASGMDSSAGQEDIKPKTMFPRQSSFSSSSSSGTKEDVQMIKETTKSVKPESQSAPLTIFYGGRVMVFDDFSAEKAKEVIDLANKGSAKSFTCFTAEVNNNHSAYSQKEIASSPNPVCSPAKTAAQEPIQPNPASLACELPIARRASLHRFLEKRKDRITSKAPYQIDGSAEASSKPTNPAWLSSR</sequence>
<evidence type="ECO:0000250" key="1">
    <source>
        <dbReference type="UniProtKB" id="Q7XPM8"/>
    </source>
</evidence>
<evidence type="ECO:0000250" key="2">
    <source>
        <dbReference type="UniProtKB" id="Q9C9E3"/>
    </source>
</evidence>
<evidence type="ECO:0000250" key="3">
    <source>
        <dbReference type="UniProtKB" id="Q9LMA8"/>
    </source>
</evidence>
<evidence type="ECO:0000255" key="4"/>
<evidence type="ECO:0000255" key="5">
    <source>
        <dbReference type="PROSITE-ProRule" id="PRU00650"/>
    </source>
</evidence>
<evidence type="ECO:0000255" key="6">
    <source>
        <dbReference type="PROSITE-ProRule" id="PRU00768"/>
    </source>
</evidence>
<evidence type="ECO:0000256" key="7">
    <source>
        <dbReference type="SAM" id="MobiDB-lite"/>
    </source>
</evidence>
<evidence type="ECO:0000269" key="8">
    <source>
    </source>
</evidence>
<evidence type="ECO:0000269" key="9">
    <source>
    </source>
</evidence>
<evidence type="ECO:0000269" key="10">
    <source>
    </source>
</evidence>
<evidence type="ECO:0000269" key="11">
    <source>
    </source>
</evidence>
<evidence type="ECO:0000269" key="12">
    <source>
    </source>
</evidence>
<evidence type="ECO:0000269" key="13">
    <source>
    </source>
</evidence>
<evidence type="ECO:0000269" key="14">
    <source>
    </source>
</evidence>
<evidence type="ECO:0000269" key="15">
    <source>
    </source>
</evidence>
<evidence type="ECO:0000269" key="16">
    <source>
    </source>
</evidence>
<evidence type="ECO:0000269" key="17">
    <source>
    </source>
</evidence>
<evidence type="ECO:0000303" key="18">
    <source>
    </source>
</evidence>
<evidence type="ECO:0000303" key="19">
    <source>
    </source>
</evidence>
<evidence type="ECO:0000303" key="20">
    <source>
    </source>
</evidence>
<evidence type="ECO:0000305" key="21"/>
<evidence type="ECO:0000312" key="22">
    <source>
        <dbReference type="Araport" id="AT1G74950"/>
    </source>
</evidence>
<evidence type="ECO:0000312" key="23">
    <source>
        <dbReference type="EMBL" id="AAD55281.1"/>
    </source>
</evidence>
<evidence type="ECO:0000312" key="24">
    <source>
        <dbReference type="EMBL" id="AAG51928.1"/>
    </source>
</evidence>
<gene>
    <name evidence="18" type="primary">TIFY10B</name>
    <name evidence="19 20" type="synonym">JAZ2</name>
    <name evidence="22" type="ordered locus">At1g74950</name>
    <name evidence="23" type="ORF">F25A4.8</name>
    <name evidence="24" type="ORF">F9E10.20</name>
</gene>
<protein>
    <recommendedName>
        <fullName evidence="18">Protein TIFY 10B</fullName>
    </recommendedName>
    <alternativeName>
        <fullName evidence="19 20">Jasmonate ZIM domain-containing protein 2</fullName>
    </alternativeName>
</protein>
<accession>Q9S7M2</accession>
<accession>Q8LBU1</accession>
<keyword id="KW-0007">Acetylation</keyword>
<keyword id="KW-1184">Jasmonic acid signaling pathway</keyword>
<keyword id="KW-0539">Nucleus</keyword>
<keyword id="KW-0611">Plant defense</keyword>
<keyword id="KW-1185">Reference proteome</keyword>
<keyword id="KW-0804">Transcription</keyword>
<keyword id="KW-0805">Transcription regulation</keyword>
<keyword id="KW-0832">Ubl conjugation</keyword>
<organism>
    <name type="scientific">Arabidopsis thaliana</name>
    <name type="common">Mouse-ear cress</name>
    <dbReference type="NCBI Taxonomy" id="3702"/>
    <lineage>
        <taxon>Eukaryota</taxon>
        <taxon>Viridiplantae</taxon>
        <taxon>Streptophyta</taxon>
        <taxon>Embryophyta</taxon>
        <taxon>Tracheophyta</taxon>
        <taxon>Spermatophyta</taxon>
        <taxon>Magnoliopsida</taxon>
        <taxon>eudicotyledons</taxon>
        <taxon>Gunneridae</taxon>
        <taxon>Pentapetalae</taxon>
        <taxon>rosids</taxon>
        <taxon>malvids</taxon>
        <taxon>Brassicales</taxon>
        <taxon>Brassicaceae</taxon>
        <taxon>Camelineae</taxon>
        <taxon>Arabidopsis</taxon>
    </lineage>
</organism>
<dbReference type="EMBL" id="AC008263">
    <property type="protein sequence ID" value="AAD55281.1"/>
    <property type="molecule type" value="Genomic_DNA"/>
</dbReference>
<dbReference type="EMBL" id="AC013258">
    <property type="protein sequence ID" value="AAG51928.1"/>
    <property type="molecule type" value="Genomic_DNA"/>
</dbReference>
<dbReference type="EMBL" id="CP002684">
    <property type="protein sequence ID" value="AEE35654.1"/>
    <property type="molecule type" value="Genomic_DNA"/>
</dbReference>
<dbReference type="EMBL" id="AF344319">
    <property type="protein sequence ID" value="AAK06870.1"/>
    <property type="molecule type" value="mRNA"/>
</dbReference>
<dbReference type="EMBL" id="AF386959">
    <property type="protein sequence ID" value="AAK62404.1"/>
    <property type="molecule type" value="mRNA"/>
</dbReference>
<dbReference type="EMBL" id="BT006301">
    <property type="protein sequence ID" value="AAP13409.1"/>
    <property type="molecule type" value="mRNA"/>
</dbReference>
<dbReference type="EMBL" id="AY086993">
    <property type="protein sequence ID" value="AAM64554.1"/>
    <property type="molecule type" value="mRNA"/>
</dbReference>
<dbReference type="PIR" id="C96779">
    <property type="entry name" value="C96779"/>
</dbReference>
<dbReference type="RefSeq" id="NP_565096.1">
    <property type="nucleotide sequence ID" value="NM_106153.4"/>
</dbReference>
<dbReference type="SMR" id="Q9S7M2"/>
<dbReference type="BioGRID" id="29053">
    <property type="interactions" value="31"/>
</dbReference>
<dbReference type="DIP" id="DIP-52214N"/>
<dbReference type="ELM" id="Q9S7M2"/>
<dbReference type="FunCoup" id="Q9S7M2">
    <property type="interactions" value="923"/>
</dbReference>
<dbReference type="IntAct" id="Q9S7M2">
    <property type="interactions" value="21"/>
</dbReference>
<dbReference type="STRING" id="3702.Q9S7M2"/>
<dbReference type="PaxDb" id="3702-AT1G74950.1"/>
<dbReference type="ProteomicsDB" id="234301"/>
<dbReference type="EnsemblPlants" id="AT1G74950.1">
    <property type="protein sequence ID" value="AT1G74950.1"/>
    <property type="gene ID" value="AT1G74950"/>
</dbReference>
<dbReference type="GeneID" id="843834"/>
<dbReference type="Gramene" id="AT1G74950.1">
    <property type="protein sequence ID" value="AT1G74950.1"/>
    <property type="gene ID" value="AT1G74950"/>
</dbReference>
<dbReference type="KEGG" id="ath:AT1G74950"/>
<dbReference type="Araport" id="AT1G74950"/>
<dbReference type="TAIR" id="AT1G74950">
    <property type="gene designation" value="TIFY10B"/>
</dbReference>
<dbReference type="eggNOG" id="ENOG502RIU4">
    <property type="taxonomic scope" value="Eukaryota"/>
</dbReference>
<dbReference type="HOGENOM" id="CLU_051749_1_0_1"/>
<dbReference type="InParanoid" id="Q9S7M2"/>
<dbReference type="PhylomeDB" id="Q9S7M2"/>
<dbReference type="PRO" id="PR:Q9S7M2"/>
<dbReference type="Proteomes" id="UP000006548">
    <property type="component" value="Chromosome 1"/>
</dbReference>
<dbReference type="ExpressionAtlas" id="Q9S7M2">
    <property type="expression patterns" value="baseline and differential"/>
</dbReference>
<dbReference type="GO" id="GO:0005634">
    <property type="term" value="C:nucleus"/>
    <property type="evidence" value="ECO:0007669"/>
    <property type="project" value="UniProtKB-SubCell"/>
</dbReference>
<dbReference type="GO" id="GO:0042802">
    <property type="term" value="F:identical protein binding"/>
    <property type="evidence" value="ECO:0000353"/>
    <property type="project" value="IntAct"/>
</dbReference>
<dbReference type="GO" id="GO:0006952">
    <property type="term" value="P:defense response"/>
    <property type="evidence" value="ECO:0007669"/>
    <property type="project" value="UniProtKB-KW"/>
</dbReference>
<dbReference type="GO" id="GO:0009753">
    <property type="term" value="P:response to jasmonic acid"/>
    <property type="evidence" value="ECO:0000270"/>
    <property type="project" value="TAIR"/>
</dbReference>
<dbReference type="GO" id="GO:0009611">
    <property type="term" value="P:response to wounding"/>
    <property type="evidence" value="ECO:0000270"/>
    <property type="project" value="TAIR"/>
</dbReference>
<dbReference type="InterPro" id="IPR018467">
    <property type="entry name" value="CCT_CS"/>
</dbReference>
<dbReference type="InterPro" id="IPR040390">
    <property type="entry name" value="TIFY/JAZ"/>
</dbReference>
<dbReference type="InterPro" id="IPR010399">
    <property type="entry name" value="Tify_dom"/>
</dbReference>
<dbReference type="PANTHER" id="PTHR33077:SF140">
    <property type="entry name" value="PROTEIN TIFY 10B"/>
    <property type="match status" value="1"/>
</dbReference>
<dbReference type="PANTHER" id="PTHR33077">
    <property type="entry name" value="PROTEIN TIFY 4A-RELATED-RELATED"/>
    <property type="match status" value="1"/>
</dbReference>
<dbReference type="Pfam" id="PF09425">
    <property type="entry name" value="Jas_motif"/>
    <property type="match status" value="1"/>
</dbReference>
<dbReference type="Pfam" id="PF06200">
    <property type="entry name" value="tify"/>
    <property type="match status" value="1"/>
</dbReference>
<dbReference type="SMART" id="SM00979">
    <property type="entry name" value="TIFY"/>
    <property type="match status" value="1"/>
</dbReference>
<dbReference type="PROSITE" id="PS51320">
    <property type="entry name" value="TIFY"/>
    <property type="match status" value="1"/>
</dbReference>
<proteinExistence type="evidence at protein level"/>
<feature type="chain" id="PRO_0000300653" description="Protein TIFY 10B">
    <location>
        <begin position="1"/>
        <end position="249"/>
    </location>
</feature>
<feature type="domain" description="Tify" evidence="5">
    <location>
        <begin position="113"/>
        <end position="148"/>
    </location>
</feature>
<feature type="region of interest" description="Disordered" evidence="7">
    <location>
        <begin position="225"/>
        <end position="249"/>
    </location>
</feature>
<feature type="short sequence motif" description="Jas" evidence="4">
    <location>
        <begin position="204"/>
        <end position="229"/>
    </location>
</feature>
<feature type="short sequence motif" description="Nuclear localization signal" evidence="6">
    <location>
        <begin position="206"/>
        <end position="213"/>
    </location>
</feature>
<feature type="compositionally biased region" description="Polar residues" evidence="7">
    <location>
        <begin position="235"/>
        <end position="249"/>
    </location>
</feature>
<feature type="sequence conflict" description="In Ref. 4; AAM64554." evidence="21" ref="4">
    <original>E</original>
    <variation>D</variation>
    <location>
        <position position="31"/>
    </location>
</feature>
<feature type="sequence conflict" description="In Ref. 4; AAM64554." evidence="21" ref="4">
    <original>N</original>
    <variation>K</variation>
    <location>
        <position position="195"/>
    </location>
</feature>
<name>TI10B_ARATH</name>